<proteinExistence type="inferred from homology"/>
<protein>
    <recommendedName>
        <fullName evidence="1">Glutamate-1-semialdehyde 2,1-aminomutase</fullName>
        <shortName evidence="1">GSA</shortName>
        <ecNumber evidence="1">5.4.3.8</ecNumber>
    </recommendedName>
    <alternativeName>
        <fullName evidence="1">Glutamate-1-semialdehyde aminotransferase</fullName>
        <shortName evidence="1">GSA-AT</shortName>
    </alternativeName>
</protein>
<sequence length="427" mass="44557">MSSNAQLFDRACRSIPGGVNSPVRAFRSVGGTPRFIKRAQGPYVWDEEDTRYIDYVGSWGPAILGHAHPDVVQAVREAALDGLSFGAPTRAEVELAEVLIERLPSLEQVRLVSSGTEATMTAIRLARGATGRAKIIKFEGCYHGHSDSLLVKAGSGLLTFGNPSSAGVPPEFVSHTLTLEYNNLAAVQAAFAQHGADIACVIVEPVAGNMNLIKPAAGFLQGLRDVCTQHGAVLIFDEVMTGFRVGPQGVQGLAGIKPDLTTLAKVIGGGMPVGALGGRADLMAHLAPLGGVYQAGTLSGNPVAVAAGLATLRLIAQPGFYEQLAAQTQRLTDGLRQRARAAGIPFAADAIGGMFGLYFQDSVPTSFAEVSAGDADAFKRFFHAMLDRGVHFAPSAFEAGFVSATHDNAVIDATLDAAEAVFAAMKG</sequence>
<name>GSA_BORPD</name>
<gene>
    <name evidence="1" type="primary">hemL</name>
    <name type="ordered locus">Bpet0557</name>
</gene>
<dbReference type="EC" id="5.4.3.8" evidence="1"/>
<dbReference type="EMBL" id="AM902716">
    <property type="protein sequence ID" value="CAP40889.1"/>
    <property type="molecule type" value="Genomic_DNA"/>
</dbReference>
<dbReference type="SMR" id="A9I1R3"/>
<dbReference type="STRING" id="94624.Bpet0557"/>
<dbReference type="KEGG" id="bpt:Bpet0557"/>
<dbReference type="eggNOG" id="COG0001">
    <property type="taxonomic scope" value="Bacteria"/>
</dbReference>
<dbReference type="UniPathway" id="UPA00251">
    <property type="reaction ID" value="UER00317"/>
</dbReference>
<dbReference type="Proteomes" id="UP000001225">
    <property type="component" value="Chromosome"/>
</dbReference>
<dbReference type="GO" id="GO:0005737">
    <property type="term" value="C:cytoplasm"/>
    <property type="evidence" value="ECO:0007669"/>
    <property type="project" value="UniProtKB-SubCell"/>
</dbReference>
<dbReference type="GO" id="GO:0042286">
    <property type="term" value="F:glutamate-1-semialdehyde 2,1-aminomutase activity"/>
    <property type="evidence" value="ECO:0007669"/>
    <property type="project" value="UniProtKB-UniRule"/>
</dbReference>
<dbReference type="GO" id="GO:0030170">
    <property type="term" value="F:pyridoxal phosphate binding"/>
    <property type="evidence" value="ECO:0007669"/>
    <property type="project" value="InterPro"/>
</dbReference>
<dbReference type="GO" id="GO:0008483">
    <property type="term" value="F:transaminase activity"/>
    <property type="evidence" value="ECO:0007669"/>
    <property type="project" value="InterPro"/>
</dbReference>
<dbReference type="GO" id="GO:0006782">
    <property type="term" value="P:protoporphyrinogen IX biosynthetic process"/>
    <property type="evidence" value="ECO:0007669"/>
    <property type="project" value="UniProtKB-UniRule"/>
</dbReference>
<dbReference type="CDD" id="cd00610">
    <property type="entry name" value="OAT_like"/>
    <property type="match status" value="1"/>
</dbReference>
<dbReference type="FunFam" id="3.40.640.10:FF:000021">
    <property type="entry name" value="Glutamate-1-semialdehyde 2,1-aminomutase"/>
    <property type="match status" value="1"/>
</dbReference>
<dbReference type="Gene3D" id="3.90.1150.10">
    <property type="entry name" value="Aspartate Aminotransferase, domain 1"/>
    <property type="match status" value="1"/>
</dbReference>
<dbReference type="Gene3D" id="3.40.640.10">
    <property type="entry name" value="Type I PLP-dependent aspartate aminotransferase-like (Major domain)"/>
    <property type="match status" value="1"/>
</dbReference>
<dbReference type="HAMAP" id="MF_00375">
    <property type="entry name" value="HemL_aminotrans_3"/>
    <property type="match status" value="1"/>
</dbReference>
<dbReference type="InterPro" id="IPR004639">
    <property type="entry name" value="4pyrrol_synth_GluAld_NH2Trfase"/>
</dbReference>
<dbReference type="InterPro" id="IPR005814">
    <property type="entry name" value="Aminotrans_3"/>
</dbReference>
<dbReference type="InterPro" id="IPR049704">
    <property type="entry name" value="Aminotrans_3_PPA_site"/>
</dbReference>
<dbReference type="InterPro" id="IPR015424">
    <property type="entry name" value="PyrdxlP-dep_Trfase"/>
</dbReference>
<dbReference type="InterPro" id="IPR015421">
    <property type="entry name" value="PyrdxlP-dep_Trfase_major"/>
</dbReference>
<dbReference type="InterPro" id="IPR015422">
    <property type="entry name" value="PyrdxlP-dep_Trfase_small"/>
</dbReference>
<dbReference type="NCBIfam" id="TIGR00713">
    <property type="entry name" value="hemL"/>
    <property type="match status" value="1"/>
</dbReference>
<dbReference type="NCBIfam" id="NF000818">
    <property type="entry name" value="PRK00062.1"/>
    <property type="match status" value="1"/>
</dbReference>
<dbReference type="PANTHER" id="PTHR43713">
    <property type="entry name" value="GLUTAMATE-1-SEMIALDEHYDE 2,1-AMINOMUTASE"/>
    <property type="match status" value="1"/>
</dbReference>
<dbReference type="PANTHER" id="PTHR43713:SF3">
    <property type="entry name" value="GLUTAMATE-1-SEMIALDEHYDE 2,1-AMINOMUTASE 1, CHLOROPLASTIC-RELATED"/>
    <property type="match status" value="1"/>
</dbReference>
<dbReference type="Pfam" id="PF00202">
    <property type="entry name" value="Aminotran_3"/>
    <property type="match status" value="1"/>
</dbReference>
<dbReference type="SUPFAM" id="SSF53383">
    <property type="entry name" value="PLP-dependent transferases"/>
    <property type="match status" value="1"/>
</dbReference>
<dbReference type="PROSITE" id="PS00600">
    <property type="entry name" value="AA_TRANSFER_CLASS_3"/>
    <property type="match status" value="1"/>
</dbReference>
<keyword id="KW-0963">Cytoplasm</keyword>
<keyword id="KW-0413">Isomerase</keyword>
<keyword id="KW-0627">Porphyrin biosynthesis</keyword>
<keyword id="KW-0663">Pyridoxal phosphate</keyword>
<accession>A9I1R3</accession>
<feature type="chain" id="PRO_1000121857" description="Glutamate-1-semialdehyde 2,1-aminomutase">
    <location>
        <begin position="1"/>
        <end position="427"/>
    </location>
</feature>
<feature type="modified residue" description="N6-(pyridoxal phosphate)lysine" evidence="1">
    <location>
        <position position="265"/>
    </location>
</feature>
<evidence type="ECO:0000255" key="1">
    <source>
        <dbReference type="HAMAP-Rule" id="MF_00375"/>
    </source>
</evidence>
<reference key="1">
    <citation type="journal article" date="2008" name="BMC Genomics">
        <title>The missing link: Bordetella petrii is endowed with both the metabolic versatility of environmental bacteria and virulence traits of pathogenic Bordetellae.</title>
        <authorList>
            <person name="Gross R."/>
            <person name="Guzman C.A."/>
            <person name="Sebaihia M."/>
            <person name="Martin dos Santos V.A.P."/>
            <person name="Pieper D.H."/>
            <person name="Koebnik R."/>
            <person name="Lechner M."/>
            <person name="Bartels D."/>
            <person name="Buhrmester J."/>
            <person name="Choudhuri J.V."/>
            <person name="Ebensen T."/>
            <person name="Gaigalat L."/>
            <person name="Herrmann S."/>
            <person name="Khachane A.N."/>
            <person name="Larisch C."/>
            <person name="Link S."/>
            <person name="Linke B."/>
            <person name="Meyer F."/>
            <person name="Mormann S."/>
            <person name="Nakunst D."/>
            <person name="Rueckert C."/>
            <person name="Schneiker-Bekel S."/>
            <person name="Schulze K."/>
            <person name="Voerholter F.-J."/>
            <person name="Yevsa T."/>
            <person name="Engle J.T."/>
            <person name="Goldman W.E."/>
            <person name="Puehler A."/>
            <person name="Goebel U.B."/>
            <person name="Goesmann A."/>
            <person name="Bloecker H."/>
            <person name="Kaiser O."/>
            <person name="Martinez-Arias R."/>
        </authorList>
    </citation>
    <scope>NUCLEOTIDE SEQUENCE [LARGE SCALE GENOMIC DNA]</scope>
    <source>
        <strain>ATCC BAA-461 / DSM 12804 / CCUG 43448</strain>
    </source>
</reference>
<organism>
    <name type="scientific">Bordetella petrii (strain ATCC BAA-461 / DSM 12804 / CCUG 43448)</name>
    <dbReference type="NCBI Taxonomy" id="340100"/>
    <lineage>
        <taxon>Bacteria</taxon>
        <taxon>Pseudomonadati</taxon>
        <taxon>Pseudomonadota</taxon>
        <taxon>Betaproteobacteria</taxon>
        <taxon>Burkholderiales</taxon>
        <taxon>Alcaligenaceae</taxon>
        <taxon>Bordetella</taxon>
    </lineage>
</organism>
<comment type="catalytic activity">
    <reaction evidence="1">
        <text>(S)-4-amino-5-oxopentanoate = 5-aminolevulinate</text>
        <dbReference type="Rhea" id="RHEA:14265"/>
        <dbReference type="ChEBI" id="CHEBI:57501"/>
        <dbReference type="ChEBI" id="CHEBI:356416"/>
        <dbReference type="EC" id="5.4.3.8"/>
    </reaction>
</comment>
<comment type="cofactor">
    <cofactor evidence="1">
        <name>pyridoxal 5'-phosphate</name>
        <dbReference type="ChEBI" id="CHEBI:597326"/>
    </cofactor>
</comment>
<comment type="pathway">
    <text evidence="1">Porphyrin-containing compound metabolism; protoporphyrin-IX biosynthesis; 5-aminolevulinate from L-glutamyl-tRNA(Glu): step 2/2.</text>
</comment>
<comment type="subunit">
    <text evidence="1">Homodimer.</text>
</comment>
<comment type="subcellular location">
    <subcellularLocation>
        <location evidence="1">Cytoplasm</location>
    </subcellularLocation>
</comment>
<comment type="similarity">
    <text evidence="1">Belongs to the class-III pyridoxal-phosphate-dependent aminotransferase family. HemL subfamily.</text>
</comment>